<reference key="1">
    <citation type="journal article" date="2000" name="Nature">
        <title>Complete genome sequence of Pseudomonas aeruginosa PAO1, an opportunistic pathogen.</title>
        <authorList>
            <person name="Stover C.K."/>
            <person name="Pham X.-Q.T."/>
            <person name="Erwin A.L."/>
            <person name="Mizoguchi S.D."/>
            <person name="Warrener P."/>
            <person name="Hickey M.J."/>
            <person name="Brinkman F.S.L."/>
            <person name="Hufnagle W.O."/>
            <person name="Kowalik D.J."/>
            <person name="Lagrou M."/>
            <person name="Garber R.L."/>
            <person name="Goltry L."/>
            <person name="Tolentino E."/>
            <person name="Westbrock-Wadman S."/>
            <person name="Yuan Y."/>
            <person name="Brody L.L."/>
            <person name="Coulter S.N."/>
            <person name="Folger K.R."/>
            <person name="Kas A."/>
            <person name="Larbig K."/>
            <person name="Lim R.M."/>
            <person name="Smith K.A."/>
            <person name="Spencer D.H."/>
            <person name="Wong G.K.-S."/>
            <person name="Wu Z."/>
            <person name="Paulsen I.T."/>
            <person name="Reizer J."/>
            <person name="Saier M.H. Jr."/>
            <person name="Hancock R.E.W."/>
            <person name="Lory S."/>
            <person name="Olson M.V."/>
        </authorList>
    </citation>
    <scope>NUCLEOTIDE SEQUENCE [LARGE SCALE GENOMIC DNA]</scope>
    <source>
        <strain>ATCC 15692 / DSM 22644 / CIP 104116 / JCM 14847 / LMG 12228 / 1C / PRS 101 / PAO1</strain>
    </source>
</reference>
<reference key="2">
    <citation type="journal article" date="2016" name="BMC Biochem.">
        <title>Substrate specificity and function of acetylpolyamine amidohydrolases from Pseudomonas aeruginosa.</title>
        <authorList>
            <person name="Kraemer A."/>
            <person name="Herzer J."/>
            <person name="Overhage J."/>
            <person name="Meyer-Almes F.J."/>
        </authorList>
    </citation>
    <scope>FUNCTION</scope>
    <scope>DEACETYLASE ACTIVITY</scope>
    <scope>BIOPHYSICOCHEMICAL PROPERTIES</scope>
    <scope>DISRUPTION PHENOTYPE</scope>
    <source>
        <strain>ATCC 15692 / DSM 22644 / CIP 104116 / JCM 14847 / LMG 12228 / 1C / PRS 101 / PAO1</strain>
        <strain>PA14</strain>
    </source>
</reference>
<reference key="3">
    <citation type="journal article" date="2017" name="ACS Infect. Dis.">
        <title>Toward photopharmacological antimicrobial chemotherapy using photoswitchable amidohydrolase inhibitors.</title>
        <authorList>
            <person name="Weston C.E."/>
            <person name="Kramer A."/>
            <person name="Colin F."/>
            <person name="Yildiz O."/>
            <person name="Baud M.G."/>
            <person name="Meyer-Almes F.J."/>
            <person name="Fuchter M.J."/>
        </authorList>
    </citation>
    <scope>X-RAY CRYSTALLOGRAPHY (2.40 ANGSTROMS) IN COMPLEX WITH ZINC AND A PHOTOSWITCHABLE LIGAND INHIBITOR</scope>
    <scope>BIOTECHNOLOGY</scope>
    <scope>ACTIVITY REGULATION</scope>
    <source>
        <strain>ATCC 15692 / DSM 22644 / CIP 104116 / JCM 14847 / LMG 12228 / 1C / PRS 101 / PAO1</strain>
    </source>
</reference>
<reference key="4">
    <citation type="journal article" date="2016" name="Biochemistry">
        <title>Crystal structure of a histone deacetylase homologue from Pseudomonas aeruginosa.</title>
        <authorList>
            <person name="Kraemer A."/>
            <person name="Wagner T."/>
            <person name="Yildiz O."/>
            <person name="Meyer-Almes F.J."/>
        </authorList>
    </citation>
    <scope>X-RAY CRYSTALLOGRAPHY (1.70 ANGSTROMS) OF 2-380 OF WILD-TYPE AND MUTANTS ALA-143 AND PHE-313 IN COMPLEXES WITH ZINC; A TRIFLUOROMETHYLKETONE INHIBITOR; ACETATE AND A HYDROXAMATE INHIBITOR</scope>
    <scope>MUTAGENESIS OF HIS-143; HIS-144 AND TYR-313</scope>
    <scope>COFACTOR</scope>
    <scope>SUBUNIT</scope>
    <source>
        <strain>ATCC 15692 / DSM 22644 / CIP 104116 / JCM 14847 / LMG 12228 / 1C / PRS 101 / PAO1</strain>
    </source>
</reference>
<keyword id="KW-0002">3D-structure</keyword>
<keyword id="KW-0378">Hydrolase</keyword>
<keyword id="KW-0479">Metal-binding</keyword>
<keyword id="KW-1185">Reference proteome</keyword>
<keyword id="KW-0862">Zinc</keyword>
<protein>
    <recommendedName>
        <fullName evidence="5">Histone deacetylase-like amidohydrolase</fullName>
        <shortName evidence="5">HDAH</shortName>
        <ecNumber evidence="2">3.5.1.-</ecNumber>
    </recommendedName>
    <alternativeName>
        <fullName evidence="7">Acetylated lysine deacetylase</fullName>
    </alternativeName>
    <alternativeName>
        <fullName evidence="6">Histone deacetylase homolog PA3774</fullName>
    </alternativeName>
</protein>
<name>HDAH_PSEAE</name>
<comment type="function">
    <text evidence="2">Probable protein deacetylase that catalyzes deacetylation of acetylated lysine residues. In vitro, exhibits high activity against artificial HDAC (histone deacetylase) substrates containing acetylated and trifluoroacetylated lysine residues. Is not able to deacetylate acetylated polyamines.</text>
</comment>
<comment type="cofactor">
    <cofactor evidence="9">
        <name>Zn(2+)</name>
        <dbReference type="ChEBI" id="CHEBI:29105"/>
    </cofactor>
    <text evidence="4">Binds 1 zinc ion per subunit.</text>
</comment>
<comment type="activity regulation">
    <text evidence="3">Is inhibited by azobenzenes, stilbenes and arylazopyrazoles.</text>
</comment>
<comment type="biophysicochemical properties">
    <kinetics>
        <KM evidence="2">95 uM for Boc-Lys(Ac)-AMC</KM>
        <KM evidence="2">21 uM for Boc-Lys(TFA)-AMC</KM>
        <Vmax evidence="2">3.4 nmol/sec/mg enzyme with Boc-Lys(Ac)-AMC as substrate</Vmax>
        <Vmax evidence="2">8.6 nmol/sec/mg enzyme with Boc-Lys(TFA)-AMC as substrate</Vmax>
    </kinetics>
</comment>
<comment type="subunit">
    <text evidence="4">Homotetramer; dimer of head-to-head dimers.</text>
</comment>
<comment type="disruption phenotype">
    <text evidence="2">Growth of a mutant strain lacking this gene in the presence of both acetylcadaverine and acetylputrescine is comparable to growth of the wild-type. The deletion mutant strain shows a 25% increase in biofilm biomass after 24 hours of incubation compared to wild-type cells.</text>
</comment>
<comment type="biotechnology">
    <text evidence="8">Could be a suitable photopharmacological target for photopharmacological antimicrobial chemotherapy using photoswitchable inhibitors.</text>
</comment>
<comment type="similarity">
    <text evidence="7">Belongs to the histone deacetylase family.</text>
</comment>
<dbReference type="EC" id="3.5.1.-" evidence="2"/>
<dbReference type="EMBL" id="AE004091">
    <property type="protein sequence ID" value="AAG07161.1"/>
    <property type="molecule type" value="Genomic_DNA"/>
</dbReference>
<dbReference type="PIR" id="D83174">
    <property type="entry name" value="D83174"/>
</dbReference>
<dbReference type="RefSeq" id="NP_252463.1">
    <property type="nucleotide sequence ID" value="NC_002516.2"/>
</dbReference>
<dbReference type="RefSeq" id="WP_003113816.1">
    <property type="nucleotide sequence ID" value="NZ_QZGE01000001.1"/>
</dbReference>
<dbReference type="PDB" id="5G0X">
    <property type="method" value="X-ray"/>
    <property type="resolution" value="1.70 A"/>
    <property type="chains" value="A/C=2-380"/>
</dbReference>
<dbReference type="PDB" id="5G0Y">
    <property type="method" value="X-ray"/>
    <property type="resolution" value="2.29 A"/>
    <property type="chains" value="A/B=2-380"/>
</dbReference>
<dbReference type="PDB" id="5G10">
    <property type="method" value="X-ray"/>
    <property type="resolution" value="1.71 A"/>
    <property type="chains" value="A/B=2-380"/>
</dbReference>
<dbReference type="PDB" id="5G11">
    <property type="method" value="X-ray"/>
    <property type="resolution" value="2.48 A"/>
    <property type="chains" value="A/B=2-380"/>
</dbReference>
<dbReference type="PDB" id="5G12">
    <property type="method" value="X-ray"/>
    <property type="resolution" value="2.02 A"/>
    <property type="chains" value="A/B=2-380"/>
</dbReference>
<dbReference type="PDB" id="5G13">
    <property type="method" value="X-ray"/>
    <property type="resolution" value="1.99 A"/>
    <property type="chains" value="A/B=2-380"/>
</dbReference>
<dbReference type="PDB" id="5LI3">
    <property type="method" value="X-ray"/>
    <property type="resolution" value="2.40 A"/>
    <property type="chains" value="A/B=1-380"/>
</dbReference>
<dbReference type="PDBsum" id="5G0X"/>
<dbReference type="PDBsum" id="5G0Y"/>
<dbReference type="PDBsum" id="5G10"/>
<dbReference type="PDBsum" id="5G11"/>
<dbReference type="PDBsum" id="5G12"/>
<dbReference type="PDBsum" id="5G13"/>
<dbReference type="PDBsum" id="5LI3"/>
<dbReference type="SMR" id="Q9HXM1"/>
<dbReference type="STRING" id="208964.PA3774"/>
<dbReference type="PaxDb" id="208964-PA3774"/>
<dbReference type="GeneID" id="880599"/>
<dbReference type="KEGG" id="pae:PA3774"/>
<dbReference type="PATRIC" id="fig|208964.12.peg.3951"/>
<dbReference type="PseudoCAP" id="PA3774"/>
<dbReference type="HOGENOM" id="CLU_007727_8_2_6"/>
<dbReference type="InParanoid" id="Q9HXM1"/>
<dbReference type="OrthoDB" id="9808367at2"/>
<dbReference type="PhylomeDB" id="Q9HXM1"/>
<dbReference type="BioCyc" id="PAER208964:G1FZ6-3845-MONOMER"/>
<dbReference type="BRENDA" id="3.5.1.98">
    <property type="organism ID" value="5087"/>
</dbReference>
<dbReference type="Proteomes" id="UP000002438">
    <property type="component" value="Chromosome"/>
</dbReference>
<dbReference type="GO" id="GO:0004407">
    <property type="term" value="F:histone deacetylase activity"/>
    <property type="evidence" value="ECO:0000318"/>
    <property type="project" value="GO_Central"/>
</dbReference>
<dbReference type="GO" id="GO:0016787">
    <property type="term" value="F:hydrolase activity"/>
    <property type="evidence" value="ECO:0000314"/>
    <property type="project" value="PseudoCAP"/>
</dbReference>
<dbReference type="GO" id="GO:0046872">
    <property type="term" value="F:metal ion binding"/>
    <property type="evidence" value="ECO:0007669"/>
    <property type="project" value="UniProtKB-KW"/>
</dbReference>
<dbReference type="GO" id="GO:0040029">
    <property type="term" value="P:epigenetic regulation of gene expression"/>
    <property type="evidence" value="ECO:0000318"/>
    <property type="project" value="GO_Central"/>
</dbReference>
<dbReference type="CDD" id="cd09996">
    <property type="entry name" value="HDAC_classII_1"/>
    <property type="match status" value="1"/>
</dbReference>
<dbReference type="Gene3D" id="3.40.800.20">
    <property type="entry name" value="Histone deacetylase domain"/>
    <property type="match status" value="1"/>
</dbReference>
<dbReference type="InterPro" id="IPR050284">
    <property type="entry name" value="HDAC_PDAC"/>
</dbReference>
<dbReference type="InterPro" id="IPR000286">
    <property type="entry name" value="His_deacetylse"/>
</dbReference>
<dbReference type="InterPro" id="IPR023801">
    <property type="entry name" value="His_deacetylse_dom"/>
</dbReference>
<dbReference type="InterPro" id="IPR037138">
    <property type="entry name" value="His_deacetylse_dom_sf"/>
</dbReference>
<dbReference type="InterPro" id="IPR023696">
    <property type="entry name" value="Ureohydrolase_dom_sf"/>
</dbReference>
<dbReference type="PANTHER" id="PTHR10625:SF10">
    <property type="entry name" value="HISTONE DEACETYLASE HDAC1"/>
    <property type="match status" value="1"/>
</dbReference>
<dbReference type="PANTHER" id="PTHR10625">
    <property type="entry name" value="HISTONE DEACETYLASE HDAC1-RELATED"/>
    <property type="match status" value="1"/>
</dbReference>
<dbReference type="Pfam" id="PF00850">
    <property type="entry name" value="Hist_deacetyl"/>
    <property type="match status" value="1"/>
</dbReference>
<dbReference type="PRINTS" id="PR01270">
    <property type="entry name" value="HDASUPER"/>
</dbReference>
<dbReference type="SUPFAM" id="SSF52768">
    <property type="entry name" value="Arginase/deacetylase"/>
    <property type="match status" value="1"/>
</dbReference>
<evidence type="ECO:0000250" key="1">
    <source>
        <dbReference type="UniProtKB" id="Q48935"/>
    </source>
</evidence>
<evidence type="ECO:0000269" key="2">
    <source>
    </source>
</evidence>
<evidence type="ECO:0000269" key="3">
    <source>
    </source>
</evidence>
<evidence type="ECO:0000269" key="4">
    <source>
    </source>
</evidence>
<evidence type="ECO:0000303" key="5">
    <source>
    </source>
</evidence>
<evidence type="ECO:0000303" key="6">
    <source>
    </source>
</evidence>
<evidence type="ECO:0000305" key="7"/>
<evidence type="ECO:0000305" key="8">
    <source>
    </source>
</evidence>
<evidence type="ECO:0000305" key="9">
    <source>
    </source>
</evidence>
<evidence type="ECO:0000312" key="10">
    <source>
        <dbReference type="EMBL" id="AAG07161.1"/>
    </source>
</evidence>
<evidence type="ECO:0000312" key="11">
    <source>
        <dbReference type="PDB" id="5LI3"/>
    </source>
</evidence>
<evidence type="ECO:0007744" key="12">
    <source>
        <dbReference type="PDB" id="5G0X"/>
    </source>
</evidence>
<evidence type="ECO:0007829" key="13">
    <source>
        <dbReference type="PDB" id="5G0X"/>
    </source>
</evidence>
<proteinExistence type="evidence at protein level"/>
<feature type="chain" id="PRO_0000439409" description="Histone deacetylase-like amidohydrolase">
    <location>
        <begin position="1"/>
        <end position="380"/>
    </location>
</feature>
<feature type="active site" description="Proton donor/acceptor" evidence="1">
    <location>
        <position position="144"/>
    </location>
</feature>
<feature type="binding site" evidence="3 4 11 12">
    <location>
        <position position="181"/>
    </location>
    <ligand>
        <name>Zn(2+)</name>
        <dbReference type="ChEBI" id="CHEBI:29105"/>
    </ligand>
</feature>
<feature type="binding site" evidence="3 4 11 12">
    <location>
        <position position="183"/>
    </location>
    <ligand>
        <name>Zn(2+)</name>
        <dbReference type="ChEBI" id="CHEBI:29105"/>
    </ligand>
</feature>
<feature type="binding site" evidence="3 4 11 12">
    <location>
        <position position="269"/>
    </location>
    <ligand>
        <name>Zn(2+)</name>
        <dbReference type="ChEBI" id="CHEBI:29105"/>
    </ligand>
</feature>
<feature type="site" description="Polarizes the scissile carbonyl of the substrate" evidence="1">
    <location>
        <position position="313"/>
    </location>
</feature>
<feature type="mutagenesis site" description="Loss of enzymatic activity against both acetylated and trifluoroacetylated lysine substrates." evidence="4">
    <original>H</original>
    <variation>A</variation>
    <location>
        <position position="143"/>
    </location>
</feature>
<feature type="mutagenesis site" description="Loss of enzymatic activity against both acetylated and trifluoroacetylated lysine substrates." evidence="4">
    <original>H</original>
    <variation>A</variation>
    <location>
        <position position="144"/>
    </location>
</feature>
<feature type="mutagenesis site" description="Loss of enzymatic activity against acetylated lysine substrate but no effect on activity with trifluoroacetylated lysine substrate." evidence="4">
    <original>Y</original>
    <variation>F</variation>
    <location>
        <position position="313"/>
    </location>
</feature>
<feature type="mutagenesis site" description="Loss of enzymatic activity against acetylated lysine substrate but only 15% decrease in activity against trifluoroacetylated lysine substrate." evidence="4">
    <original>Y</original>
    <variation>H</variation>
    <location>
        <position position="313"/>
    </location>
</feature>
<feature type="strand" evidence="13">
    <location>
        <begin position="5"/>
        <end position="8"/>
    </location>
</feature>
<feature type="helix" evidence="13">
    <location>
        <begin position="11"/>
        <end position="15"/>
    </location>
</feature>
<feature type="strand" evidence="13">
    <location>
        <begin position="21"/>
        <end position="23"/>
    </location>
</feature>
<feature type="strand" evidence="13">
    <location>
        <begin position="25"/>
        <end position="28"/>
    </location>
</feature>
<feature type="strand" evidence="13">
    <location>
        <begin position="39"/>
        <end position="41"/>
    </location>
</feature>
<feature type="helix" evidence="13">
    <location>
        <begin position="44"/>
        <end position="55"/>
    </location>
</feature>
<feature type="helix" evidence="13">
    <location>
        <begin position="58"/>
        <end position="61"/>
    </location>
</feature>
<feature type="strand" evidence="13">
    <location>
        <begin position="62"/>
        <end position="65"/>
    </location>
</feature>
<feature type="helix" evidence="13">
    <location>
        <begin position="72"/>
        <end position="76"/>
    </location>
</feature>
<feature type="helix" evidence="13">
    <location>
        <begin position="81"/>
        <end position="92"/>
    </location>
</feature>
<feature type="strand" evidence="13">
    <location>
        <begin position="96"/>
        <end position="99"/>
    </location>
</feature>
<feature type="strand" evidence="13">
    <location>
        <begin position="102"/>
        <end position="104"/>
    </location>
</feature>
<feature type="helix" evidence="13">
    <location>
        <begin position="108"/>
        <end position="127"/>
    </location>
</feature>
<feature type="strand" evidence="13">
    <location>
        <begin position="132"/>
        <end position="136"/>
    </location>
</feature>
<feature type="strand" evidence="13">
    <location>
        <begin position="154"/>
        <end position="156"/>
    </location>
</feature>
<feature type="helix" evidence="13">
    <location>
        <begin position="158"/>
        <end position="170"/>
    </location>
</feature>
<feature type="strand" evidence="13">
    <location>
        <begin position="175"/>
        <end position="179"/>
    </location>
</feature>
<feature type="strand" evidence="13">
    <location>
        <begin position="181"/>
        <end position="183"/>
    </location>
</feature>
<feature type="helix" evidence="13">
    <location>
        <begin position="186"/>
        <end position="191"/>
    </location>
</feature>
<feature type="turn" evidence="13">
    <location>
        <begin position="192"/>
        <end position="194"/>
    </location>
</feature>
<feature type="strand" evidence="13">
    <location>
        <begin position="196"/>
        <end position="205"/>
    </location>
</feature>
<feature type="turn" evidence="13">
    <location>
        <begin position="206"/>
        <end position="212"/>
    </location>
</feature>
<feature type="helix" evidence="13">
    <location>
        <begin position="222"/>
        <end position="224"/>
    </location>
</feature>
<feature type="strand" evidence="13">
    <location>
        <begin position="227"/>
        <end position="233"/>
    </location>
</feature>
<feature type="helix" evidence="13">
    <location>
        <begin position="239"/>
        <end position="248"/>
    </location>
</feature>
<feature type="helix" evidence="13">
    <location>
        <begin position="250"/>
        <end position="257"/>
    </location>
</feature>
<feature type="strand" evidence="13">
    <location>
        <begin position="260"/>
        <end position="266"/>
    </location>
</feature>
<feature type="helix" evidence="13">
    <location>
        <begin position="283"/>
        <end position="300"/>
    </location>
</feature>
<feature type="strand" evidence="13">
    <location>
        <begin position="305"/>
        <end position="309"/>
    </location>
</feature>
<feature type="turn" evidence="13">
    <location>
        <begin position="315"/>
        <end position="317"/>
    </location>
</feature>
<feature type="helix" evidence="13">
    <location>
        <begin position="318"/>
        <end position="330"/>
    </location>
</feature>
<feature type="helix" evidence="13">
    <location>
        <begin position="341"/>
        <end position="346"/>
    </location>
</feature>
<feature type="helix" evidence="13">
    <location>
        <begin position="351"/>
        <end position="367"/>
    </location>
</feature>
<accession>Q9HXM1</accession>
<sequence length="380" mass="41049">MTRRTAFFFDELCLWHAAGPHALTLPVGGWVQPPAAAGHAESPETKRRLKSLLDVSGLTARLQLRSAPPASDEDLLRVHPAHYLERFKALSDAGGGSLGQDAPIGPGSYEIARLSAGLAIAALDAVLAGEADNAYSLSRPPGHHCLPDQAMGFCFFANIAVAIEAAKARHGVERVAVLDWDVHHGNGTQAIYYRRDDVLSISLHQDGCFPPGYSGAEDIGEDRGRGFNLNVPLLPGGGHDAYMQAMQRIVLPALERFRPQLIVVASGFDANAVDPLARMQLHSDSFRAMTAMVRDAAERHAGGRLVVVHEGGYSEAYVPFCGLAVIEELSGVRSAVRDPLRDFIELQQPNAAFRDFQRQRLEELAAQFGLCPAQPLQAAR</sequence>
<gene>
    <name evidence="10" type="ordered locus">PA3774</name>
</gene>
<organism>
    <name type="scientific">Pseudomonas aeruginosa (strain ATCC 15692 / DSM 22644 / CIP 104116 / JCM 14847 / LMG 12228 / 1C / PRS 101 / PAO1)</name>
    <dbReference type="NCBI Taxonomy" id="208964"/>
    <lineage>
        <taxon>Bacteria</taxon>
        <taxon>Pseudomonadati</taxon>
        <taxon>Pseudomonadota</taxon>
        <taxon>Gammaproteobacteria</taxon>
        <taxon>Pseudomonadales</taxon>
        <taxon>Pseudomonadaceae</taxon>
        <taxon>Pseudomonas</taxon>
    </lineage>
</organism>